<name>RRT14_PICGU</name>
<reference key="1">
    <citation type="journal article" date="2009" name="Nature">
        <title>Evolution of pathogenicity and sexual reproduction in eight Candida genomes.</title>
        <authorList>
            <person name="Butler G."/>
            <person name="Rasmussen M.D."/>
            <person name="Lin M.F."/>
            <person name="Santos M.A.S."/>
            <person name="Sakthikumar S."/>
            <person name="Munro C.A."/>
            <person name="Rheinbay E."/>
            <person name="Grabherr M."/>
            <person name="Forche A."/>
            <person name="Reedy J.L."/>
            <person name="Agrafioti I."/>
            <person name="Arnaud M.B."/>
            <person name="Bates S."/>
            <person name="Brown A.J.P."/>
            <person name="Brunke S."/>
            <person name="Costanzo M.C."/>
            <person name="Fitzpatrick D.A."/>
            <person name="de Groot P.W.J."/>
            <person name="Harris D."/>
            <person name="Hoyer L.L."/>
            <person name="Hube B."/>
            <person name="Klis F.M."/>
            <person name="Kodira C."/>
            <person name="Lennard N."/>
            <person name="Logue M.E."/>
            <person name="Martin R."/>
            <person name="Neiman A.M."/>
            <person name="Nikolaou E."/>
            <person name="Quail M.A."/>
            <person name="Quinn J."/>
            <person name="Santos M.C."/>
            <person name="Schmitzberger F.F."/>
            <person name="Sherlock G."/>
            <person name="Shah P."/>
            <person name="Silverstein K.A.T."/>
            <person name="Skrzypek M.S."/>
            <person name="Soll D."/>
            <person name="Staggs R."/>
            <person name="Stansfield I."/>
            <person name="Stumpf M.P.H."/>
            <person name="Sudbery P.E."/>
            <person name="Srikantha T."/>
            <person name="Zeng Q."/>
            <person name="Berman J."/>
            <person name="Berriman M."/>
            <person name="Heitman J."/>
            <person name="Gow N.A.R."/>
            <person name="Lorenz M.C."/>
            <person name="Birren B.W."/>
            <person name="Kellis M."/>
            <person name="Cuomo C.A."/>
        </authorList>
    </citation>
    <scope>NUCLEOTIDE SEQUENCE [LARGE SCALE GENOMIC DNA]</scope>
    <source>
        <strain>ATCC 6260 / CBS 566 / DSM 6381 / JCM 1539 / NBRC 10279 / NRRL Y-324</strain>
    </source>
</reference>
<accession>A5DFI4</accession>
<feature type="chain" id="PRO_0000404345" description="Regulator of rDNA transcription 14">
    <location>
        <begin position="1"/>
        <end position="191"/>
    </location>
</feature>
<feature type="region of interest" description="Disordered" evidence="2">
    <location>
        <begin position="34"/>
        <end position="91"/>
    </location>
</feature>
<feature type="region of interest" description="Disordered" evidence="2">
    <location>
        <begin position="145"/>
        <end position="191"/>
    </location>
</feature>
<feature type="compositionally biased region" description="Polar residues" evidence="2">
    <location>
        <begin position="35"/>
        <end position="48"/>
    </location>
</feature>
<feature type="compositionally biased region" description="Basic residues" evidence="2">
    <location>
        <begin position="60"/>
        <end position="73"/>
    </location>
</feature>
<feature type="compositionally biased region" description="Basic residues" evidence="2">
    <location>
        <begin position="82"/>
        <end position="91"/>
    </location>
</feature>
<feature type="compositionally biased region" description="Basic residues" evidence="2">
    <location>
        <begin position="147"/>
        <end position="156"/>
    </location>
</feature>
<gene>
    <name type="primary">RRT14</name>
    <name type="ORF">PGUG_02035</name>
</gene>
<sequence>MSFSSQSSKSSAESTLQKFLSGIVPVEAVQAGKARSQSKAQSVNNQLKTRALSADEVRRLQKKAKLKQQRKLKKQQEEAKKVNKLAKHQIIKSHKENNELTVEEEKYLNKIVKRNANSLSRLSEIEDYELKSELESLQEEILAAQRKSNKKTKQKSKKDFNEKLKRGKISYPGLTPGLAPVGLDDDDEDSD</sequence>
<protein>
    <recommendedName>
        <fullName>Regulator of rDNA transcription 14</fullName>
    </recommendedName>
</protein>
<organism>
    <name type="scientific">Meyerozyma guilliermondii (strain ATCC 6260 / CBS 566 / DSM 6381 / JCM 1539 / NBRC 10279 / NRRL Y-324)</name>
    <name type="common">Yeast</name>
    <name type="synonym">Candida guilliermondii</name>
    <dbReference type="NCBI Taxonomy" id="294746"/>
    <lineage>
        <taxon>Eukaryota</taxon>
        <taxon>Fungi</taxon>
        <taxon>Dikarya</taxon>
        <taxon>Ascomycota</taxon>
        <taxon>Saccharomycotina</taxon>
        <taxon>Pichiomycetes</taxon>
        <taxon>Debaryomycetaceae</taxon>
        <taxon>Meyerozyma</taxon>
    </lineage>
</organism>
<comment type="function">
    <text evidence="1">Involved in ribosome biogenesis, probably through modulation of rDNA transcription.</text>
</comment>
<comment type="subcellular location">
    <subcellularLocation>
        <location evidence="1">Nucleus</location>
        <location evidence="1">Nucleolus</location>
    </subcellularLocation>
</comment>
<comment type="similarity">
    <text evidence="3">Belongs to the RRT14 family.</text>
</comment>
<comment type="sequence caution" evidence="3">
    <conflict type="erroneous initiation">
        <sequence resource="EMBL-CDS" id="EDK37937"/>
    </conflict>
    <text>Extended N-terminus.</text>
</comment>
<keyword id="KW-0539">Nucleus</keyword>
<keyword id="KW-1185">Reference proteome</keyword>
<keyword id="KW-0804">Transcription</keyword>
<keyword id="KW-0805">Transcription regulation</keyword>
<proteinExistence type="inferred from homology"/>
<evidence type="ECO:0000250" key="1"/>
<evidence type="ECO:0000256" key="2">
    <source>
        <dbReference type="SAM" id="MobiDB-lite"/>
    </source>
</evidence>
<evidence type="ECO:0000305" key="3"/>
<dbReference type="EMBL" id="CH408156">
    <property type="protein sequence ID" value="EDK37937.2"/>
    <property type="status" value="ALT_INIT"/>
    <property type="molecule type" value="Genomic_DNA"/>
</dbReference>
<dbReference type="RefSeq" id="XP_001486364.1">
    <property type="nucleotide sequence ID" value="XM_001486314.1"/>
</dbReference>
<dbReference type="SMR" id="A5DFI4"/>
<dbReference type="FunCoup" id="A5DFI4">
    <property type="interactions" value="255"/>
</dbReference>
<dbReference type="STRING" id="294746.A5DFI4"/>
<dbReference type="GeneID" id="5127701"/>
<dbReference type="KEGG" id="pgu:PGUG_02035"/>
<dbReference type="eggNOG" id="ENOG502S1G1">
    <property type="taxonomic scope" value="Eukaryota"/>
</dbReference>
<dbReference type="HOGENOM" id="CLU_095038_0_0_1"/>
<dbReference type="InParanoid" id="A5DFI4"/>
<dbReference type="OrthoDB" id="4069371at2759"/>
<dbReference type="Proteomes" id="UP000001997">
    <property type="component" value="Unassembled WGS sequence"/>
</dbReference>
<dbReference type="GO" id="GO:0005730">
    <property type="term" value="C:nucleolus"/>
    <property type="evidence" value="ECO:0007669"/>
    <property type="project" value="UniProtKB-SubCell"/>
</dbReference>
<dbReference type="InterPro" id="IPR031404">
    <property type="entry name" value="Rrt14"/>
</dbReference>
<dbReference type="Pfam" id="PF17075">
    <property type="entry name" value="RRT14"/>
    <property type="match status" value="1"/>
</dbReference>